<dbReference type="EMBL" id="U00672">
    <property type="protein sequence ID" value="AAA17896.1"/>
    <property type="molecule type" value="mRNA"/>
</dbReference>
<dbReference type="EMBL" id="AY195619">
    <property type="protein sequence ID" value="AAN86349.1"/>
    <property type="molecule type" value="Genomic_DNA"/>
</dbReference>
<dbReference type="EMBL" id="EF444988">
    <property type="protein sequence ID" value="ACA06005.1"/>
    <property type="molecule type" value="Genomic_DNA"/>
</dbReference>
<dbReference type="EMBL" id="AK291645">
    <property type="protein sequence ID" value="BAF84334.1"/>
    <property type="molecule type" value="mRNA"/>
</dbReference>
<dbReference type="EMBL" id="AP002962">
    <property type="status" value="NOT_ANNOTATED_CDS"/>
    <property type="molecule type" value="Genomic_DNA"/>
</dbReference>
<dbReference type="EMBL" id="CH471065">
    <property type="protein sequence ID" value="EAW67343.1"/>
    <property type="molecule type" value="Genomic_DNA"/>
</dbReference>
<dbReference type="EMBL" id="BC028082">
    <property type="protein sequence ID" value="AAH28082.1"/>
    <property type="molecule type" value="mRNA"/>
</dbReference>
<dbReference type="CCDS" id="CCDS8388.1"/>
<dbReference type="PIR" id="I56215">
    <property type="entry name" value="I56215"/>
</dbReference>
<dbReference type="RefSeq" id="NP_001549.2">
    <property type="nucleotide sequence ID" value="NM_001558.4"/>
</dbReference>
<dbReference type="PDB" id="1J7V">
    <property type="method" value="X-ray"/>
    <property type="resolution" value="2.90 A"/>
    <property type="chains" value="R=22-235"/>
</dbReference>
<dbReference type="PDB" id="1LQS">
    <property type="method" value="X-ray"/>
    <property type="resolution" value="2.70 A"/>
    <property type="chains" value="R/S=22-235"/>
</dbReference>
<dbReference type="PDB" id="1Y6K">
    <property type="method" value="X-ray"/>
    <property type="resolution" value="2.52 A"/>
    <property type="chains" value="R=22-235"/>
</dbReference>
<dbReference type="PDB" id="1Y6M">
    <property type="method" value="X-ray"/>
    <property type="resolution" value="2.80 A"/>
    <property type="chains" value="R=22-235"/>
</dbReference>
<dbReference type="PDB" id="1Y6N">
    <property type="method" value="X-ray"/>
    <property type="resolution" value="2.70 A"/>
    <property type="chains" value="R=22-235"/>
</dbReference>
<dbReference type="PDB" id="5IXI">
    <property type="method" value="X-ray"/>
    <property type="resolution" value="2.57 A"/>
    <property type="chains" value="B=263-303"/>
</dbReference>
<dbReference type="PDB" id="6X93">
    <property type="method" value="EM"/>
    <property type="resolution" value="3.50 A"/>
    <property type="chains" value="B/E=22-235"/>
</dbReference>
<dbReference type="PDBsum" id="1J7V"/>
<dbReference type="PDBsum" id="1LQS"/>
<dbReference type="PDBsum" id="1Y6K"/>
<dbReference type="PDBsum" id="1Y6M"/>
<dbReference type="PDBsum" id="1Y6N"/>
<dbReference type="PDBsum" id="5IXI"/>
<dbReference type="PDBsum" id="6X93"/>
<dbReference type="EMDB" id="EMD-22098"/>
<dbReference type="SMR" id="Q13651"/>
<dbReference type="BioGRID" id="109801">
    <property type="interactions" value="23"/>
</dbReference>
<dbReference type="ComplexPortal" id="CPX-742">
    <property type="entry name" value="Interleukin-10 receptor-ligand complex"/>
</dbReference>
<dbReference type="CORUM" id="Q13651"/>
<dbReference type="DIP" id="DIP-3512N"/>
<dbReference type="FunCoup" id="Q13651">
    <property type="interactions" value="698"/>
</dbReference>
<dbReference type="IntAct" id="Q13651">
    <property type="interactions" value="32"/>
</dbReference>
<dbReference type="MINT" id="Q13651"/>
<dbReference type="STRING" id="9606.ENSP00000227752"/>
<dbReference type="ChEMBL" id="CHEMBL4804254"/>
<dbReference type="GuidetoPHARMACOLOGY" id="1727"/>
<dbReference type="TCDB" id="8.A.132.1.13">
    <property type="family name" value="the interferon/interleukin receptor (iir) family"/>
</dbReference>
<dbReference type="GlyCosmos" id="Q13651">
    <property type="glycosylation" value="6 sites, No reported glycans"/>
</dbReference>
<dbReference type="GlyGen" id="Q13651">
    <property type="glycosylation" value="7 sites"/>
</dbReference>
<dbReference type="iPTMnet" id="Q13651"/>
<dbReference type="PhosphoSitePlus" id="Q13651"/>
<dbReference type="BioMuta" id="IL10RA"/>
<dbReference type="DMDM" id="322510034"/>
<dbReference type="PaxDb" id="9606-ENSP00000227752"/>
<dbReference type="PeptideAtlas" id="Q13651"/>
<dbReference type="Antibodypedia" id="18560">
    <property type="antibodies" value="894 antibodies from 40 providers"/>
</dbReference>
<dbReference type="DNASU" id="3587"/>
<dbReference type="Ensembl" id="ENST00000227752.8">
    <property type="protein sequence ID" value="ENSP00000227752.4"/>
    <property type="gene ID" value="ENSG00000110324.12"/>
</dbReference>
<dbReference type="GeneID" id="3587"/>
<dbReference type="KEGG" id="hsa:3587"/>
<dbReference type="MANE-Select" id="ENST00000227752.8">
    <property type="protein sequence ID" value="ENSP00000227752.4"/>
    <property type="RefSeq nucleotide sequence ID" value="NM_001558.4"/>
    <property type="RefSeq protein sequence ID" value="NP_001549.2"/>
</dbReference>
<dbReference type="UCSC" id="uc001prv.5">
    <property type="organism name" value="human"/>
</dbReference>
<dbReference type="AGR" id="HGNC:5964"/>
<dbReference type="CTD" id="3587"/>
<dbReference type="DisGeNET" id="3587"/>
<dbReference type="GeneCards" id="IL10RA"/>
<dbReference type="HGNC" id="HGNC:5964">
    <property type="gene designation" value="IL10RA"/>
</dbReference>
<dbReference type="HPA" id="ENSG00000110324">
    <property type="expression patterns" value="Tissue enhanced (bone marrow, lymphoid tissue)"/>
</dbReference>
<dbReference type="MalaCards" id="IL10RA"/>
<dbReference type="MIM" id="146933">
    <property type="type" value="gene"/>
</dbReference>
<dbReference type="MIM" id="613148">
    <property type="type" value="phenotype"/>
</dbReference>
<dbReference type="neXtProt" id="NX_Q13651"/>
<dbReference type="OpenTargets" id="ENSG00000110324"/>
<dbReference type="Orphanet" id="238569">
    <property type="disease" value="Immune dysregulation-inflammatory bowel disease-arthritis-recurrent infections syndrome"/>
</dbReference>
<dbReference type="PharmGKB" id="PA29779"/>
<dbReference type="VEuPathDB" id="HostDB:ENSG00000110324"/>
<dbReference type="eggNOG" id="ENOG502S2PS">
    <property type="taxonomic scope" value="Eukaryota"/>
</dbReference>
<dbReference type="GeneTree" id="ENSGT00510000048847"/>
<dbReference type="HOGENOM" id="CLU_033904_0_0_1"/>
<dbReference type="InParanoid" id="Q13651"/>
<dbReference type="OMA" id="TGQWNQP"/>
<dbReference type="OrthoDB" id="9886749at2759"/>
<dbReference type="PAN-GO" id="Q13651">
    <property type="GO annotations" value="3 GO annotations based on evolutionary models"/>
</dbReference>
<dbReference type="PhylomeDB" id="Q13651"/>
<dbReference type="TreeFam" id="TF334107"/>
<dbReference type="PathwayCommons" id="Q13651"/>
<dbReference type="Reactome" id="R-HSA-6783783">
    <property type="pathway name" value="Interleukin-10 signaling"/>
</dbReference>
<dbReference type="Reactome" id="R-HSA-9725371">
    <property type="pathway name" value="Nuclear events stimulated by ALK signaling in cancer"/>
</dbReference>
<dbReference type="SignaLink" id="Q13651"/>
<dbReference type="SIGNOR" id="Q13651"/>
<dbReference type="BioGRID-ORCS" id="3587">
    <property type="hits" value="12 hits in 1156 CRISPR screens"/>
</dbReference>
<dbReference type="ChiTaRS" id="IL10RA">
    <property type="organism name" value="human"/>
</dbReference>
<dbReference type="EvolutionaryTrace" id="Q13651"/>
<dbReference type="GeneWiki" id="Interleukin_10_receptor,_alpha_subunit"/>
<dbReference type="GenomeRNAi" id="3587"/>
<dbReference type="Pharos" id="Q13651">
    <property type="development level" value="Tbio"/>
</dbReference>
<dbReference type="PRO" id="PR:Q13651"/>
<dbReference type="Proteomes" id="UP000005640">
    <property type="component" value="Chromosome 11"/>
</dbReference>
<dbReference type="RNAct" id="Q13651">
    <property type="molecule type" value="protein"/>
</dbReference>
<dbReference type="Bgee" id="ENSG00000110324">
    <property type="expression patterns" value="Expressed in granulocyte and 157 other cell types or tissues"/>
</dbReference>
<dbReference type="ExpressionAtlas" id="Q13651">
    <property type="expression patterns" value="baseline and differential"/>
</dbReference>
<dbReference type="GO" id="GO:0016324">
    <property type="term" value="C:apical plasma membrane"/>
    <property type="evidence" value="ECO:0000314"/>
    <property type="project" value="UniProt"/>
</dbReference>
<dbReference type="GO" id="GO:0005929">
    <property type="term" value="C:cilium"/>
    <property type="evidence" value="ECO:0000314"/>
    <property type="project" value="HPA"/>
</dbReference>
<dbReference type="GO" id="GO:0005829">
    <property type="term" value="C:cytosol"/>
    <property type="evidence" value="ECO:0000314"/>
    <property type="project" value="HPA"/>
</dbReference>
<dbReference type="GO" id="GO:0005654">
    <property type="term" value="C:nucleoplasm"/>
    <property type="evidence" value="ECO:0000314"/>
    <property type="project" value="HPA"/>
</dbReference>
<dbReference type="GO" id="GO:0005886">
    <property type="term" value="C:plasma membrane"/>
    <property type="evidence" value="ECO:0000314"/>
    <property type="project" value="UniProtKB"/>
</dbReference>
<dbReference type="GO" id="GO:0019969">
    <property type="term" value="F:interleukin-10 binding"/>
    <property type="evidence" value="ECO:0007669"/>
    <property type="project" value="Ensembl"/>
</dbReference>
<dbReference type="GO" id="GO:0004920">
    <property type="term" value="F:interleukin-10 receptor activity"/>
    <property type="evidence" value="ECO:0000314"/>
    <property type="project" value="UniProt"/>
</dbReference>
<dbReference type="GO" id="GO:0038023">
    <property type="term" value="F:signaling receptor activity"/>
    <property type="evidence" value="ECO:0000304"/>
    <property type="project" value="ProtInc"/>
</dbReference>
<dbReference type="GO" id="GO:0019221">
    <property type="term" value="P:cytokine-mediated signaling pathway"/>
    <property type="evidence" value="ECO:0000318"/>
    <property type="project" value="GO_Central"/>
</dbReference>
<dbReference type="GO" id="GO:0140105">
    <property type="term" value="P:interleukin-10-mediated signaling pathway"/>
    <property type="evidence" value="ECO:0000314"/>
    <property type="project" value="UniProt"/>
</dbReference>
<dbReference type="GO" id="GO:0060729">
    <property type="term" value="P:intestinal epithelial structure maintenance"/>
    <property type="evidence" value="ECO:0000314"/>
    <property type="project" value="UniProt"/>
</dbReference>
<dbReference type="GO" id="GO:0010507">
    <property type="term" value="P:negative regulation of autophagy"/>
    <property type="evidence" value="ECO:0000314"/>
    <property type="project" value="UniProtKB"/>
</dbReference>
<dbReference type="GO" id="GO:0050728">
    <property type="term" value="P:negative regulation of inflammatory response"/>
    <property type="evidence" value="ECO:0000314"/>
    <property type="project" value="UniProt"/>
</dbReference>
<dbReference type="GO" id="GO:0046427">
    <property type="term" value="P:positive regulation of receptor signaling pathway via JAK-STAT"/>
    <property type="evidence" value="ECO:0000314"/>
    <property type="project" value="UniProtKB"/>
</dbReference>
<dbReference type="GO" id="GO:0050807">
    <property type="term" value="P:regulation of synapse organization"/>
    <property type="evidence" value="ECO:0007669"/>
    <property type="project" value="Ensembl"/>
</dbReference>
<dbReference type="GO" id="GO:0032496">
    <property type="term" value="P:response to lipopolysaccharide"/>
    <property type="evidence" value="ECO:0007669"/>
    <property type="project" value="Ensembl"/>
</dbReference>
<dbReference type="GO" id="GO:0070086">
    <property type="term" value="P:ubiquitin-dependent endocytosis"/>
    <property type="evidence" value="ECO:0000314"/>
    <property type="project" value="UniProtKB"/>
</dbReference>
<dbReference type="FunFam" id="2.60.40.10:FF:000348">
    <property type="entry name" value="Interleukin 20 receptor subunit alpha"/>
    <property type="match status" value="1"/>
</dbReference>
<dbReference type="FunFam" id="2.60.40.10:FF:001488">
    <property type="entry name" value="Interleukin-10 receptor subunit alpha"/>
    <property type="match status" value="1"/>
</dbReference>
<dbReference type="Gene3D" id="2.60.40.10">
    <property type="entry name" value="Immunoglobulins"/>
    <property type="match status" value="2"/>
</dbReference>
<dbReference type="InterPro" id="IPR003961">
    <property type="entry name" value="FN3_dom"/>
</dbReference>
<dbReference type="InterPro" id="IPR036116">
    <property type="entry name" value="FN3_sf"/>
</dbReference>
<dbReference type="InterPro" id="IPR013783">
    <property type="entry name" value="Ig-like_fold"/>
</dbReference>
<dbReference type="InterPro" id="IPR050650">
    <property type="entry name" value="Type-II_Cytokine-TF_Rcpt"/>
</dbReference>
<dbReference type="PANTHER" id="PTHR20859">
    <property type="entry name" value="INTERFERON/INTERLEUKIN RECEPTOR"/>
    <property type="match status" value="1"/>
</dbReference>
<dbReference type="PANTHER" id="PTHR20859:SF90">
    <property type="entry name" value="INTERLEUKIN-10 RECEPTOR SUBUNIT ALPHA"/>
    <property type="match status" value="1"/>
</dbReference>
<dbReference type="Pfam" id="PF01108">
    <property type="entry name" value="Tissue_fac"/>
    <property type="match status" value="1"/>
</dbReference>
<dbReference type="SUPFAM" id="SSF49265">
    <property type="entry name" value="Fibronectin type III"/>
    <property type="match status" value="2"/>
</dbReference>
<keyword id="KW-0002">3D-structure</keyword>
<keyword id="KW-1003">Cell membrane</keyword>
<keyword id="KW-0963">Cytoplasm</keyword>
<keyword id="KW-0903">Direct protein sequencing</keyword>
<keyword id="KW-0225">Disease variant</keyword>
<keyword id="KW-1015">Disulfide bond</keyword>
<keyword id="KW-0325">Glycoprotein</keyword>
<keyword id="KW-0472">Membrane</keyword>
<keyword id="KW-0597">Phosphoprotein</keyword>
<keyword id="KW-1267">Proteomics identification</keyword>
<keyword id="KW-0675">Receptor</keyword>
<keyword id="KW-1185">Reference proteome</keyword>
<keyword id="KW-0732">Signal</keyword>
<keyword id="KW-0812">Transmembrane</keyword>
<keyword id="KW-1133">Transmembrane helix</keyword>
<keyword id="KW-0832">Ubl conjugation</keyword>
<accession>Q13651</accession>
<accession>A8K6I0</accession>
<accession>B0YJ27</accession>
<comment type="function">
    <text evidence="6 11 16">Cell surface receptor for the cytokine IL10 that participates in IL10-mediated anti-inflammatory functions, limiting excessive tissue disruption caused by inflammation. Upon binding to IL10, induces a conformational change in IL10RB, allowing IL10RB to bind IL10 as well (PubMed:16982608). In turn, the heterotetrameric assembly complex, composed of two subunits of IL10RA and IL10RB, activates the kinases JAK1 and TYK2 that are constitutively associated with IL10RA and IL10RB respectively (PubMed:12133952). These kinases then phosphorylate specific tyrosine residues in the intracellular domain in IL10RA leading to the recruitment and subsequent phosphorylation of STAT3. Once phosphorylated, STAT3 homodimerizes, translocates to the nucleus and activates the expression of anti-inflammatory genes. In addition, IL10RA-mediated activation of STAT3 inhibits starvation-induced autophagy (PubMed:26962683).</text>
</comment>
<comment type="subunit">
    <text evidence="1 6 10 11 13">Interacts with IL10 (PubMed:15837194, PubMed:16982608). Interacts with IL10RB (PubMed:16982608). Interacts (via its cytoplasmic domain) with JAK1 (via N-terminus) (PubMed:12133952). Interacts with BTRC; this interaction leads to IL10RA ubiquitination and subsequent degradation (PubMed:22087322). Interacts with STAT3 (By similarity).</text>
</comment>
<comment type="subunit">
    <text evidence="5">(Microbial infection) Interacts with human cytomegalovirus protein IL10.</text>
</comment>
<comment type="subunit">
    <text evidence="10">(Microbial infection) Interacts with Epstein-Barr virus protein IL10.</text>
</comment>
<comment type="interaction">
    <interactant intactId="EBI-1031656">
        <id>Q13651</id>
    </interactant>
    <interactant intactId="EBI-721179">
        <id>P27449</id>
        <label>ATP6V0C</label>
    </interactant>
    <organismsDiffer>false</organismsDiffer>
    <experiments>3</experiments>
</comment>
<comment type="interaction">
    <interactant intactId="EBI-1031656">
        <id>Q13651</id>
    </interactant>
    <interactant intactId="EBI-307461">
        <id>Q9Y297</id>
        <label>BTRC</label>
    </interactant>
    <organismsDiffer>false</organismsDiffer>
    <experiments>6</experiments>
</comment>
<comment type="interaction">
    <interactant intactId="EBI-1031656">
        <id>Q13651</id>
    </interactant>
    <interactant intactId="EBI-12062109">
        <id>Q86Z23</id>
        <label>C1QL4</label>
    </interactant>
    <organismsDiffer>false</organismsDiffer>
    <experiments>3</experiments>
</comment>
<comment type="interaction">
    <interactant intactId="EBI-1031656">
        <id>Q13651</id>
    </interactant>
    <interactant intactId="EBI-14259393">
        <id>Q8IX05</id>
        <label>CD302</label>
    </interactant>
    <organismsDiffer>false</organismsDiffer>
    <experiments>3</experiments>
</comment>
<comment type="interaction">
    <interactant intactId="EBI-1031656">
        <id>Q13651</id>
    </interactant>
    <interactant intactId="EBI-3913685">
        <id>O95674</id>
        <label>CDS2</label>
    </interactant>
    <organismsDiffer>false</organismsDiffer>
    <experiments>3</experiments>
</comment>
<comment type="interaction">
    <interactant intactId="EBI-1031656">
        <id>Q13651</id>
    </interactant>
    <interactant intactId="EBI-7247651">
        <id>Q96MX0</id>
        <label>CMTM3</label>
    </interactant>
    <organismsDiffer>false</organismsDiffer>
    <experiments>3</experiments>
</comment>
<comment type="interaction">
    <interactant intactId="EBI-1031656">
        <id>Q13651</id>
    </interactant>
    <interactant intactId="EBI-702665">
        <id>P02724</id>
        <label>GYPA</label>
    </interactant>
    <organismsDiffer>false</organismsDiffer>
    <experiments>3</experiments>
</comment>
<comment type="interaction">
    <interactant intactId="EBI-1031656">
        <id>Q13651</id>
    </interactant>
    <interactant intactId="EBI-12051643">
        <id>B0YJ81</id>
        <label>HACD1</label>
    </interactant>
    <organismsDiffer>false</organismsDiffer>
    <experiments>3</experiments>
</comment>
<comment type="interaction">
    <interactant intactId="EBI-1031656">
        <id>Q13651</id>
    </interactant>
    <interactant intactId="EBI-530257">
        <id>Q6Y1H2</id>
        <label>HACD2</label>
    </interactant>
    <organismsDiffer>false</organismsDiffer>
    <experiments>3</experiments>
</comment>
<comment type="interaction">
    <interactant intactId="EBI-1031656">
        <id>Q13651</id>
    </interactant>
    <interactant intactId="EBI-1031632">
        <id>P22301</id>
        <label>IL10</label>
    </interactant>
    <organismsDiffer>false</organismsDiffer>
    <experiments>9</experiments>
</comment>
<comment type="interaction">
    <interactant intactId="EBI-1031656">
        <id>Q13651</id>
    </interactant>
    <interactant intactId="EBI-3932027">
        <id>P21145</id>
        <label>MAL</label>
    </interactant>
    <organismsDiffer>false</organismsDiffer>
    <experiments>3</experiments>
</comment>
<comment type="interaction">
    <interactant intactId="EBI-1031656">
        <id>Q13651</id>
    </interactant>
    <interactant intactId="EBI-9550165">
        <id>Q0D2K0</id>
        <label>NIPAL4</label>
    </interactant>
    <organismsDiffer>false</organismsDiffer>
    <experiments>3</experiments>
</comment>
<comment type="interaction">
    <interactant intactId="EBI-1031656">
        <id>Q13651</id>
    </interactant>
    <interactant intactId="EBI-11721828">
        <id>Q8IY26</id>
        <label>PLPP6</label>
    </interactant>
    <organismsDiffer>false</organismsDiffer>
    <experiments>3</experiments>
</comment>
<comment type="interaction">
    <interactant intactId="EBI-1031656">
        <id>Q13651</id>
    </interactant>
    <interactant intactId="EBI-8636004">
        <id>Q96GQ5</id>
        <label>RUSF1</label>
    </interactant>
    <organismsDiffer>false</organismsDiffer>
    <experiments>3</experiments>
</comment>
<comment type="interaction">
    <interactant intactId="EBI-1031656">
        <id>Q13651</id>
    </interactant>
    <interactant intactId="EBI-9679163">
        <id>Q9Y6D0</id>
        <label>SELENOK</label>
    </interactant>
    <organismsDiffer>false</organismsDiffer>
    <experiments>3</experiments>
</comment>
<comment type="interaction">
    <interactant intactId="EBI-1031656">
        <id>Q13651</id>
    </interactant>
    <interactant intactId="EBI-8644112">
        <id>Q9BRI3</id>
        <label>SLC30A2</label>
    </interactant>
    <organismsDiffer>false</organismsDiffer>
    <experiments>3</experiments>
</comment>
<comment type="interaction">
    <interactant intactId="EBI-1031656">
        <id>Q13651</id>
    </interactant>
    <interactant intactId="EBI-10314552">
        <id>Q9NVC3</id>
        <label>SLC38A7</label>
    </interactant>
    <organismsDiffer>false</organismsDiffer>
    <experiments>3</experiments>
</comment>
<comment type="interaction">
    <interactant intactId="EBI-1031656">
        <id>Q13651</id>
    </interactant>
    <interactant intactId="EBI-3907610">
        <id>Q8N2U9</id>
        <label>SLC66A2</label>
    </interactant>
    <organismsDiffer>false</organismsDiffer>
    <experiments>3</experiments>
</comment>
<comment type="interaction">
    <interactant intactId="EBI-1031656">
        <id>Q13651</id>
    </interactant>
    <interactant intactId="EBI-5235586">
        <id>Q8TBB6</id>
        <label>SLC7A14</label>
    </interactant>
    <organismsDiffer>false</organismsDiffer>
    <experiments>3</experiments>
</comment>
<comment type="interaction">
    <interactant intactId="EBI-1031656">
        <id>Q13651</id>
    </interactant>
    <interactant intactId="EBI-8640191">
        <id>Q9NRQ5</id>
        <label>SMCO4</label>
    </interactant>
    <organismsDiffer>false</organismsDiffer>
    <experiments>3</experiments>
</comment>
<comment type="interaction">
    <interactant intactId="EBI-1031656">
        <id>Q13651</id>
    </interactant>
    <interactant intactId="EBI-10315004">
        <id>Q9NWH2</id>
        <label>TMEM242</label>
    </interactant>
    <organismsDiffer>false</organismsDiffer>
    <experiments>3</experiments>
</comment>
<comment type="interaction">
    <interactant intactId="EBI-1031656">
        <id>Q13651</id>
    </interactant>
    <interactant intactId="EBI-2852148">
        <id>Q9H2L4</id>
        <label>TMEM60</label>
    </interactant>
    <organismsDiffer>false</organismsDiffer>
    <experiments>3</experiments>
</comment>
<comment type="interaction">
    <interactant intactId="EBI-1031656">
        <id>Q13651</id>
    </interactant>
    <interactant intactId="EBI-2820477">
        <id>Q71RG4</id>
        <label>TMUB2</label>
    </interactant>
    <organismsDiffer>false</organismsDiffer>
    <experiments>3</experiments>
</comment>
<comment type="interaction">
    <interactant intactId="EBI-1031656">
        <id>Q13651</id>
    </interactant>
    <interactant intactId="EBI-10191195">
        <id>O95183</id>
        <label>VAMP5</label>
    </interactant>
    <organismsDiffer>false</organismsDiffer>
    <experiments>3</experiments>
</comment>
<comment type="interaction">
    <interactant intactId="EBI-1031656">
        <id>Q13651</id>
    </interactant>
    <interactant intactId="EBI-751210">
        <id>Q96EC8</id>
        <label>YIPF6</label>
    </interactant>
    <organismsDiffer>false</organismsDiffer>
    <experiments>3</experiments>
</comment>
<comment type="interaction">
    <interactant intactId="EBI-1031656">
        <id>Q13651</id>
    </interactant>
    <interactant intactId="EBI-1042167">
        <id>P03180</id>
        <label>BCRF1</label>
    </interactant>
    <organismsDiffer>true</organismsDiffer>
    <experiments>4</experiments>
</comment>
<comment type="interaction">
    <interactant intactId="EBI-1031656">
        <id>Q13651</id>
    </interactant>
    <interactant intactId="EBI-2548993">
        <id>P03495</id>
        <label>NS</label>
    </interactant>
    <organismsDiffer>true</organismsDiffer>
    <experiments>2</experiments>
</comment>
<comment type="interaction">
    <interactant intactId="EBI-1031656">
        <id>Q13651</id>
    </interactant>
    <interactant intactId="EBI-1033736">
        <id>P17150</id>
        <label>UL111A</label>
    </interactant>
    <organismsDiffer>true</organismsDiffer>
    <experiments>2</experiments>
</comment>
<comment type="subcellular location">
    <subcellularLocation>
        <location evidence="13 16">Cell membrane</location>
        <topology>Single-pass type I membrane protein</topology>
    </subcellularLocation>
    <subcellularLocation>
        <location evidence="16">Cytoplasm</location>
    </subcellularLocation>
</comment>
<comment type="tissue specificity">
    <text>Primarily expressed in hematopoetic cells including B-cells, T-cells, NK cells, monocytes and macrophages. Not expressed in non-hematopoetic cells such as fibroblasts or endothelial cells.</text>
</comment>
<comment type="PTM">
    <text evidence="1">Phosphorylated. Phosphorylation of the cytoplasmic tail induced STAT3 activation.</text>
</comment>
<comment type="PTM">
    <text evidence="13">Ubiquitinated by BTRC; ubiquitination leads to endocytosis and subsequent degradation of IL10RA.</text>
</comment>
<comment type="disease" evidence="12 14 15">
    <disease id="DI-02674">
        <name>Inflammatory bowel disease 28, autosomal recessive</name>
        <acronym>IBD28</acronym>
        <description>A chronic, relapsing inflammation of the gastrointestinal tract with a complex etiology. It is subdivided into Crohn disease and ulcerative colitis phenotypes. Crohn disease may affect any part of the gastrointestinal tract from the mouth to the anus, but most frequently it involves the terminal ileum and colon. Bowel inflammation is transmural and discontinuous; it may contain granulomas or be associated with intestinal or perianal fistulas. In contrast, in ulcerative colitis, the inflammation is continuous and limited to rectal and colonic mucosal layers; fistulas and granulomas are not observed. Both diseases include extraintestinal inflammation of the skin, eyes, or joints.</description>
        <dbReference type="MIM" id="613148"/>
    </disease>
    <text>The disease is caused by variants affecting the gene represented in this entry.</text>
</comment>
<comment type="similarity">
    <text evidence="20">Belongs to the type II cytokine receptor family.</text>
</comment>
<name>I10R1_HUMAN</name>
<protein>
    <recommendedName>
        <fullName>Interleukin-10 receptor subunit alpha</fullName>
        <shortName>IL-10 receptor subunit alpha</shortName>
        <shortName>IL-10R subunit alpha</shortName>
        <shortName>IL-10RA</shortName>
    </recommendedName>
    <alternativeName>
        <fullName>CDw210a</fullName>
    </alternativeName>
    <alternativeName>
        <fullName>Interleukin-10 receptor subunit 1</fullName>
        <shortName>IL-10R subunit 1</shortName>
        <shortName>IL-10R1</shortName>
    </alternativeName>
    <cdAntigenName>CD210</cdAntigenName>
</protein>
<evidence type="ECO:0000250" key="1">
    <source>
        <dbReference type="UniProtKB" id="Q61727"/>
    </source>
</evidence>
<evidence type="ECO:0000255" key="2"/>
<evidence type="ECO:0000256" key="3">
    <source>
        <dbReference type="SAM" id="MobiDB-lite"/>
    </source>
</evidence>
<evidence type="ECO:0000269" key="4">
    <source>
    </source>
</evidence>
<evidence type="ECO:0000269" key="5">
    <source>
    </source>
</evidence>
<evidence type="ECO:0000269" key="6">
    <source>
    </source>
</evidence>
<evidence type="ECO:0000269" key="7">
    <source>
    </source>
</evidence>
<evidence type="ECO:0000269" key="8">
    <source>
    </source>
</evidence>
<evidence type="ECO:0000269" key="9">
    <source>
    </source>
</evidence>
<evidence type="ECO:0000269" key="10">
    <source>
    </source>
</evidence>
<evidence type="ECO:0000269" key="11">
    <source>
    </source>
</evidence>
<evidence type="ECO:0000269" key="12">
    <source>
    </source>
</evidence>
<evidence type="ECO:0000269" key="13">
    <source>
    </source>
</evidence>
<evidence type="ECO:0000269" key="14">
    <source>
    </source>
</evidence>
<evidence type="ECO:0000269" key="15">
    <source>
    </source>
</evidence>
<evidence type="ECO:0000269" key="16">
    <source>
    </source>
</evidence>
<evidence type="ECO:0000269" key="17">
    <source>
    </source>
</evidence>
<evidence type="ECO:0000269" key="18">
    <source ref="2"/>
</evidence>
<evidence type="ECO:0000269" key="19">
    <source ref="6"/>
</evidence>
<evidence type="ECO:0000305" key="20"/>
<evidence type="ECO:0007829" key="21">
    <source>
        <dbReference type="PDB" id="1Y6K"/>
    </source>
</evidence>
<evidence type="ECO:0007829" key="22">
    <source>
        <dbReference type="PDB" id="5IXI"/>
    </source>
</evidence>
<evidence type="ECO:0007829" key="23">
    <source>
        <dbReference type="PDB" id="6X93"/>
    </source>
</evidence>
<gene>
    <name type="primary">IL10RA</name>
    <name type="synonym">IL10R</name>
</gene>
<reference key="1">
    <citation type="journal article" date="1994" name="J. Immunol.">
        <title>Expression cloning and characterization of a human IL-10 receptor.</title>
        <authorList>
            <person name="Liu Y."/>
            <person name="Wei S.H.-Y."/>
            <person name="Ho A.S.-Y."/>
            <person name="de Waal Malefyt R."/>
            <person name="Moore K.W."/>
        </authorList>
    </citation>
    <scope>NUCLEOTIDE SEQUENCE [MRNA]</scope>
    <scope>VARIANT GLY-351</scope>
    <source>
        <tissue>Lymphoma</tissue>
    </source>
</reference>
<reference key="2">
    <citation type="submission" date="2002-12" db="EMBL/GenBank/DDBJ databases">
        <authorList>
            <consortium name="SeattleSNPs variation discovery resource"/>
        </authorList>
    </citation>
    <scope>NUCLEOTIDE SEQUENCE [GENOMIC DNA]</scope>
    <scope>VARIANTS VAL-61; ILE-113; GLY-159; GLN-212; GLY-351 AND LEU-420</scope>
</reference>
<reference key="3">
    <citation type="submission" date="2007-02" db="EMBL/GenBank/DDBJ databases">
        <authorList>
            <consortium name="NHLBI resequencing and genotyping service (RS&amp;G)"/>
        </authorList>
    </citation>
    <scope>NUCLEOTIDE SEQUENCE [GENOMIC DNA]</scope>
</reference>
<reference key="4">
    <citation type="journal article" date="2004" name="Nat. Genet.">
        <title>Complete sequencing and characterization of 21,243 full-length human cDNAs.</title>
        <authorList>
            <person name="Ota T."/>
            <person name="Suzuki Y."/>
            <person name="Nishikawa T."/>
            <person name="Otsuki T."/>
            <person name="Sugiyama T."/>
            <person name="Irie R."/>
            <person name="Wakamatsu A."/>
            <person name="Hayashi K."/>
            <person name="Sato H."/>
            <person name="Nagai K."/>
            <person name="Kimura K."/>
            <person name="Makita H."/>
            <person name="Sekine M."/>
            <person name="Obayashi M."/>
            <person name="Nishi T."/>
            <person name="Shibahara T."/>
            <person name="Tanaka T."/>
            <person name="Ishii S."/>
            <person name="Yamamoto J."/>
            <person name="Saito K."/>
            <person name="Kawai Y."/>
            <person name="Isono Y."/>
            <person name="Nakamura Y."/>
            <person name="Nagahari K."/>
            <person name="Murakami K."/>
            <person name="Yasuda T."/>
            <person name="Iwayanagi T."/>
            <person name="Wagatsuma M."/>
            <person name="Shiratori A."/>
            <person name="Sudo H."/>
            <person name="Hosoiri T."/>
            <person name="Kaku Y."/>
            <person name="Kodaira H."/>
            <person name="Kondo H."/>
            <person name="Sugawara M."/>
            <person name="Takahashi M."/>
            <person name="Kanda K."/>
            <person name="Yokoi T."/>
            <person name="Furuya T."/>
            <person name="Kikkawa E."/>
            <person name="Omura Y."/>
            <person name="Abe K."/>
            <person name="Kamihara K."/>
            <person name="Katsuta N."/>
            <person name="Sato K."/>
            <person name="Tanikawa M."/>
            <person name="Yamazaki M."/>
            <person name="Ninomiya K."/>
            <person name="Ishibashi T."/>
            <person name="Yamashita H."/>
            <person name="Murakawa K."/>
            <person name="Fujimori K."/>
            <person name="Tanai H."/>
            <person name="Kimata M."/>
            <person name="Watanabe M."/>
            <person name="Hiraoka S."/>
            <person name="Chiba Y."/>
            <person name="Ishida S."/>
            <person name="Ono Y."/>
            <person name="Takiguchi S."/>
            <person name="Watanabe S."/>
            <person name="Yosida M."/>
            <person name="Hotuta T."/>
            <person name="Kusano J."/>
            <person name="Kanehori K."/>
            <person name="Takahashi-Fujii A."/>
            <person name="Hara H."/>
            <person name="Tanase T.-O."/>
            <person name="Nomura Y."/>
            <person name="Togiya S."/>
            <person name="Komai F."/>
            <person name="Hara R."/>
            <person name="Takeuchi K."/>
            <person name="Arita M."/>
            <person name="Imose N."/>
            <person name="Musashino K."/>
            <person name="Yuuki H."/>
            <person name="Oshima A."/>
            <person name="Sasaki N."/>
            <person name="Aotsuka S."/>
            <person name="Yoshikawa Y."/>
            <person name="Matsunawa H."/>
            <person name="Ichihara T."/>
            <person name="Shiohata N."/>
            <person name="Sano S."/>
            <person name="Moriya S."/>
            <person name="Momiyama H."/>
            <person name="Satoh N."/>
            <person name="Takami S."/>
            <person name="Terashima Y."/>
            <person name="Suzuki O."/>
            <person name="Nakagawa S."/>
            <person name="Senoh A."/>
            <person name="Mizoguchi H."/>
            <person name="Goto Y."/>
            <person name="Shimizu F."/>
            <person name="Wakebe H."/>
            <person name="Hishigaki H."/>
            <person name="Watanabe T."/>
            <person name="Sugiyama A."/>
            <person name="Takemoto M."/>
            <person name="Kawakami B."/>
            <person name="Yamazaki M."/>
            <person name="Watanabe K."/>
            <person name="Kumagai A."/>
            <person name="Itakura S."/>
            <person name="Fukuzumi Y."/>
            <person name="Fujimori Y."/>
            <person name="Komiyama M."/>
            <person name="Tashiro H."/>
            <person name="Tanigami A."/>
            <person name="Fujiwara T."/>
            <person name="Ono T."/>
            <person name="Yamada K."/>
            <person name="Fujii Y."/>
            <person name="Ozaki K."/>
            <person name="Hirao M."/>
            <person name="Ohmori Y."/>
            <person name="Kawabata A."/>
            <person name="Hikiji T."/>
            <person name="Kobatake N."/>
            <person name="Inagaki H."/>
            <person name="Ikema Y."/>
            <person name="Okamoto S."/>
            <person name="Okitani R."/>
            <person name="Kawakami T."/>
            <person name="Noguchi S."/>
            <person name="Itoh T."/>
            <person name="Shigeta K."/>
            <person name="Senba T."/>
            <person name="Matsumura K."/>
            <person name="Nakajima Y."/>
            <person name="Mizuno T."/>
            <person name="Morinaga M."/>
            <person name="Sasaki M."/>
            <person name="Togashi T."/>
            <person name="Oyama M."/>
            <person name="Hata H."/>
            <person name="Watanabe M."/>
            <person name="Komatsu T."/>
            <person name="Mizushima-Sugano J."/>
            <person name="Satoh T."/>
            <person name="Shirai Y."/>
            <person name="Takahashi Y."/>
            <person name="Nakagawa K."/>
            <person name="Okumura K."/>
            <person name="Nagase T."/>
            <person name="Nomura N."/>
            <person name="Kikuchi H."/>
            <person name="Masuho Y."/>
            <person name="Yamashita R."/>
            <person name="Nakai K."/>
            <person name="Yada T."/>
            <person name="Nakamura Y."/>
            <person name="Ohara O."/>
            <person name="Isogai T."/>
            <person name="Sugano S."/>
        </authorList>
    </citation>
    <scope>NUCLEOTIDE SEQUENCE [LARGE SCALE MRNA]</scope>
    <scope>VARIANT GLY-351</scope>
    <source>
        <tissue>Placenta</tissue>
    </source>
</reference>
<reference key="5">
    <citation type="journal article" date="2006" name="Nature">
        <title>Human chromosome 11 DNA sequence and analysis including novel gene identification.</title>
        <authorList>
            <person name="Taylor T.D."/>
            <person name="Noguchi H."/>
            <person name="Totoki Y."/>
            <person name="Toyoda A."/>
            <person name="Kuroki Y."/>
            <person name="Dewar K."/>
            <person name="Lloyd C."/>
            <person name="Itoh T."/>
            <person name="Takeda T."/>
            <person name="Kim D.-W."/>
            <person name="She X."/>
            <person name="Barlow K.F."/>
            <person name="Bloom T."/>
            <person name="Bruford E."/>
            <person name="Chang J.L."/>
            <person name="Cuomo C.A."/>
            <person name="Eichler E."/>
            <person name="FitzGerald M.G."/>
            <person name="Jaffe D.B."/>
            <person name="LaButti K."/>
            <person name="Nicol R."/>
            <person name="Park H.-S."/>
            <person name="Seaman C."/>
            <person name="Sougnez C."/>
            <person name="Yang X."/>
            <person name="Zimmer A.R."/>
            <person name="Zody M.C."/>
            <person name="Birren B.W."/>
            <person name="Nusbaum C."/>
            <person name="Fujiyama A."/>
            <person name="Hattori M."/>
            <person name="Rogers J."/>
            <person name="Lander E.S."/>
            <person name="Sakaki Y."/>
        </authorList>
    </citation>
    <scope>NUCLEOTIDE SEQUENCE [LARGE SCALE GENOMIC DNA]</scope>
</reference>
<reference key="6">
    <citation type="submission" date="2005-07" db="EMBL/GenBank/DDBJ databases">
        <authorList>
            <person name="Mural R.J."/>
            <person name="Istrail S."/>
            <person name="Sutton G.G."/>
            <person name="Florea L."/>
            <person name="Halpern A.L."/>
            <person name="Mobarry C.M."/>
            <person name="Lippert R."/>
            <person name="Walenz B."/>
            <person name="Shatkay H."/>
            <person name="Dew I."/>
            <person name="Miller J.R."/>
            <person name="Flanigan M.J."/>
            <person name="Edwards N.J."/>
            <person name="Bolanos R."/>
            <person name="Fasulo D."/>
            <person name="Halldorsson B.V."/>
            <person name="Hannenhalli S."/>
            <person name="Turner R."/>
            <person name="Yooseph S."/>
            <person name="Lu F."/>
            <person name="Nusskern D.R."/>
            <person name="Shue B.C."/>
            <person name="Zheng X.H."/>
            <person name="Zhong F."/>
            <person name="Delcher A.L."/>
            <person name="Huson D.H."/>
            <person name="Kravitz S.A."/>
            <person name="Mouchard L."/>
            <person name="Reinert K."/>
            <person name="Remington K.A."/>
            <person name="Clark A.G."/>
            <person name="Waterman M.S."/>
            <person name="Eichler E.E."/>
            <person name="Adams M.D."/>
            <person name="Hunkapiller M.W."/>
            <person name="Myers E.W."/>
            <person name="Venter J.C."/>
        </authorList>
    </citation>
    <scope>NUCLEOTIDE SEQUENCE [LARGE SCALE GENOMIC DNA]</scope>
    <scope>VARIANT GLY-351</scope>
</reference>
<reference key="7">
    <citation type="journal article" date="2004" name="Genome Res.">
        <title>The status, quality, and expansion of the NIH full-length cDNA project: the Mammalian Gene Collection (MGC).</title>
        <authorList>
            <consortium name="The MGC Project Team"/>
        </authorList>
    </citation>
    <scope>NUCLEOTIDE SEQUENCE [LARGE SCALE MRNA]</scope>
    <scope>VARIANT GLY-351</scope>
    <source>
        <tissue>Blood</tissue>
    </source>
</reference>
<reference key="8">
    <citation type="journal article" date="2004" name="Protein Sci.">
        <title>Signal peptide prediction based on analysis of experimentally verified cleavage sites.</title>
        <authorList>
            <person name="Zhang Z."/>
            <person name="Henzel W.J."/>
        </authorList>
    </citation>
    <scope>PROTEIN SEQUENCE OF 22-36</scope>
</reference>
<reference key="9">
    <citation type="journal article" date="2002" name="J. Immunol.">
        <title>Two distinct domains within the N-terminal region of Janus kinase 1 interact with cytokine receptors.</title>
        <authorList>
            <person name="Usacheva A."/>
            <person name="Kotenko S."/>
            <person name="Witte M.M."/>
            <person name="Colamonici O.R."/>
        </authorList>
    </citation>
    <scope>FUNCTION</scope>
    <scope>INTERACTION WITH JAK1</scope>
</reference>
<reference key="10">
    <citation type="journal article" date="2006" name="J. Biol. Chem.">
        <title>Conformational changes mediate interleukin-10 receptor 2 (IL-10R2) binding to IL-10 and assembly of the signaling complex.</title>
        <authorList>
            <person name="Yoon S.I."/>
            <person name="Logsdon N.J."/>
            <person name="Sheikh F."/>
            <person name="Donnelly R.P."/>
            <person name="Walter M.R."/>
        </authorList>
    </citation>
    <scope>FUNCTION</scope>
    <scope>INTERACTION WITH IL10 AND IL10RB</scope>
</reference>
<reference key="11">
    <citation type="journal article" date="2011" name="PLoS ONE">
        <title>Regulation of interleukin-10 receptor ubiquitination and stability by beta-TrCP-containing ubiquitin E3 ligase.</title>
        <authorList>
            <person name="Jiang H."/>
            <person name="Lu Y."/>
            <person name="Yuan L."/>
            <person name="Liu J."/>
        </authorList>
    </citation>
    <scope>INTERACTION WITH BTRC</scope>
    <scope>SUBCELLULAR LOCATION</scope>
    <scope>UBIQUITINATION</scope>
</reference>
<reference key="12">
    <citation type="journal article" date="2016" name="Cell Death Dis.">
        <title>IL10 inhibits starvation-induced autophagy in hypertrophic scar fibroblasts via cross talk between the IL10-IL10R-STAT3 and IL10-AKT-mTOR pathways.</title>
        <authorList>
            <person name="Shi J."/>
            <person name="Wang H."/>
            <person name="Guan H."/>
            <person name="Shi S."/>
            <person name="Li Y."/>
            <person name="Wu X."/>
            <person name="Li N."/>
            <person name="Yang C."/>
            <person name="Bai X."/>
            <person name="Cai W."/>
            <person name="Yang F."/>
            <person name="Wang X."/>
            <person name="Su L."/>
            <person name="Zheng Z."/>
            <person name="Hu D."/>
        </authorList>
    </citation>
    <scope>FUNCTION</scope>
    <scope>SUBCELLULAR LOCATION</scope>
</reference>
<reference key="13">
    <citation type="journal article" date="2001" name="Immunity">
        <title>Crystal structure of the IL-10/IL-10R1 complex reveals a shared receptor binding site.</title>
        <authorList>
            <person name="Josephson K."/>
            <person name="Logsdon N.J."/>
            <person name="Walter M.R."/>
        </authorList>
    </citation>
    <scope>X-RAY CRYSTALLOGRAPHY (2.9 ANGSTROMS) OF 22-235 IN COMPLEX WITH IL10</scope>
    <scope>DISULFIDE BONDS</scope>
</reference>
<reference key="14">
    <citation type="journal article" date="2002" name="Proc. Natl. Acad. Sci. U.S.A.">
        <title>Crystal structure of human cytomegalovirus IL-10 bound to soluble human IL-10R1.</title>
        <authorList>
            <person name="Jones B.C."/>
            <person name="Logsdon N.J."/>
            <person name="Josephson K."/>
            <person name="Cook J."/>
            <person name="Barry P.A."/>
            <person name="Walter M.R."/>
        </authorList>
    </citation>
    <scope>X-RAY CRYSTALLOGRAPHY (2.7 ANGSTROMS) OF 22-235 IN COMPLEX WITH CYTOMEGALOVIRUS IL10 (MICROBIAL INFECTION)</scope>
</reference>
<reference key="15">
    <citation type="journal article" date="2005" name="Structure">
        <title>Same structure, different function crystal structure of the Epstein-Barr virus IL-10 bound to the soluble IL-10R1 chain.</title>
        <authorList>
            <person name="Yoon S.I."/>
            <person name="Jones B.C."/>
            <person name="Logsdon N.J."/>
            <person name="Walter M.R."/>
        </authorList>
    </citation>
    <scope>X-RAY CRYSTALLOGRAPHY (2.5 ANGSTROMS) OF 22-335 IN COMPLEX WITH IL10 AND EPSTEIN-BARR VIRUS IL10 (MICROBIAL INFECTION)</scope>
</reference>
<reference key="16">
    <citation type="journal article" date="2009" name="N. Engl. J. Med.">
        <title>Inflammatory bowel disease and mutations affecting the interleukin-10 receptor.</title>
        <authorList>
            <person name="Glocker E.O."/>
            <person name="Kotlarz D."/>
            <person name="Boztug K."/>
            <person name="Gertz E.M."/>
            <person name="Schaffer A.A."/>
            <person name="Noyan F."/>
            <person name="Perro M."/>
            <person name="Diestelhorst J."/>
            <person name="Allroth A."/>
            <person name="Murugan D."/>
            <person name="Hatscher N."/>
            <person name="Pfeifer D."/>
            <person name="Sykora K.W."/>
            <person name="Sauer M."/>
            <person name="Kreipe H."/>
            <person name="Lacher M."/>
            <person name="Nustede R."/>
            <person name="Woellner C."/>
            <person name="Baumann U."/>
            <person name="Salzer U."/>
            <person name="Koletzko S."/>
            <person name="Shah N."/>
            <person name="Segal A.W."/>
            <person name="Sauerbrey A."/>
            <person name="Buderus S."/>
            <person name="Snapper S.B."/>
            <person name="Grimbacher B."/>
            <person name="Klein C."/>
        </authorList>
    </citation>
    <scope>VARIANTS IBD28 ILE-84 AND ARG-141</scope>
</reference>
<reference key="17">
    <citation type="journal article" date="2013" name="Eur. J. Gastroenterol. Hepatol.">
        <title>Interleukin-10 receptor mutations in children with neonatal-onset Crohn's disease and intractable ulcerating enterocolitis.</title>
        <authorList>
            <person name="Shim J.O."/>
            <person name="Hwang S."/>
            <person name="Yang H.R."/>
            <person name="Moon J.S."/>
            <person name="Chang J.Y."/>
            <person name="Ko J.S."/>
            <person name="Park S.S."/>
            <person name="Kang G.H."/>
            <person name="Kim W.S."/>
            <person name="Seo J.K."/>
        </authorList>
    </citation>
    <scope>VARIANTS IBD28 CYS-91; TRP-101; HIS-117 AND CYS-262</scope>
</reference>
<reference key="18">
    <citation type="journal article" date="2014" name="J. Hum. Genet.">
        <title>Very early-onset inflammatory bowel disease (IBD) in infancy is a different disease entity from adult-onset IBD; one form of interleukin-10 receptor mutations.</title>
        <authorList>
            <person name="Shim J.O."/>
            <person name="Seo J.K."/>
        </authorList>
    </citation>
    <scope>VARIANTS IBD28 ARG-69; CYS-91; TRP-101; HIS-117 AND CYS-262</scope>
</reference>
<organism>
    <name type="scientific">Homo sapiens</name>
    <name type="common">Human</name>
    <dbReference type="NCBI Taxonomy" id="9606"/>
    <lineage>
        <taxon>Eukaryota</taxon>
        <taxon>Metazoa</taxon>
        <taxon>Chordata</taxon>
        <taxon>Craniata</taxon>
        <taxon>Vertebrata</taxon>
        <taxon>Euteleostomi</taxon>
        <taxon>Mammalia</taxon>
        <taxon>Eutheria</taxon>
        <taxon>Euarchontoglires</taxon>
        <taxon>Primates</taxon>
        <taxon>Haplorrhini</taxon>
        <taxon>Catarrhini</taxon>
        <taxon>Hominidae</taxon>
        <taxon>Homo</taxon>
    </lineage>
</organism>
<feature type="signal peptide" evidence="8">
    <location>
        <begin position="1"/>
        <end position="21"/>
    </location>
</feature>
<feature type="chain" id="PRO_0000011012" description="Interleukin-10 receptor subunit alpha">
    <location>
        <begin position="22"/>
        <end position="578"/>
    </location>
</feature>
<feature type="topological domain" description="Extracellular" evidence="2">
    <location>
        <begin position="22"/>
        <end position="235"/>
    </location>
</feature>
<feature type="transmembrane region" description="Helical" evidence="2">
    <location>
        <begin position="236"/>
        <end position="256"/>
    </location>
</feature>
<feature type="topological domain" description="Cytoplasmic" evidence="2">
    <location>
        <begin position="257"/>
        <end position="578"/>
    </location>
</feature>
<feature type="region of interest" description="Disordered" evidence="3">
    <location>
        <begin position="313"/>
        <end position="436"/>
    </location>
</feature>
<feature type="short sequence motif" description="BTRC recognition motif" evidence="13">
    <location>
        <begin position="318"/>
        <end position="323"/>
    </location>
</feature>
<feature type="compositionally biased region" description="Polar residues" evidence="3">
    <location>
        <begin position="316"/>
        <end position="332"/>
    </location>
</feature>
<feature type="compositionally biased region" description="Low complexity" evidence="3">
    <location>
        <begin position="357"/>
        <end position="371"/>
    </location>
</feature>
<feature type="compositionally biased region" description="Polar residues" evidence="3">
    <location>
        <begin position="377"/>
        <end position="396"/>
    </location>
</feature>
<feature type="glycosylation site" description="N-linked (GlcNAc...) asparagine" evidence="2">
    <location>
        <position position="50"/>
    </location>
</feature>
<feature type="glycosylation site" description="N-linked (GlcNAc...) asparagine" evidence="2">
    <location>
        <position position="74"/>
    </location>
</feature>
<feature type="glycosylation site" description="N-linked (GlcNAc...) asparagine" evidence="2">
    <location>
        <position position="110"/>
    </location>
</feature>
<feature type="glycosylation site" description="N-linked (GlcNAc...) asparagine" evidence="2">
    <location>
        <position position="154"/>
    </location>
</feature>
<feature type="glycosylation site" description="N-linked (GlcNAc...) asparagine" evidence="2">
    <location>
        <position position="177"/>
    </location>
</feature>
<feature type="glycosylation site" description="N-linked (GlcNAc...) asparagine" evidence="2">
    <location>
        <position position="189"/>
    </location>
</feature>
<feature type="disulfide bond" evidence="4">
    <location>
        <begin position="56"/>
        <end position="75"/>
    </location>
</feature>
<feature type="disulfide bond" evidence="4">
    <location>
        <begin position="202"/>
        <end position="223"/>
    </location>
</feature>
<feature type="sequence variant" id="VAR_016294" description="In dbSNP:rs4252250." evidence="18">
    <original>L</original>
    <variation>V</variation>
    <location>
        <position position="61"/>
    </location>
</feature>
<feature type="sequence variant" id="VAR_071663" description="In IBD28; dbSNP:rs1343534194." evidence="15">
    <original>W</original>
    <variation>R</variation>
    <location>
        <position position="69"/>
    </location>
</feature>
<feature type="sequence variant" id="VAR_063542" description="In IBD28; dbSNP:rs137853580." evidence="12">
    <original>T</original>
    <variation>I</variation>
    <location>
        <position position="84"/>
    </location>
</feature>
<feature type="sequence variant" id="VAR_071664" description="In IBD28; dbSNP:rs1591261607." evidence="14 15">
    <original>Y</original>
    <variation>C</variation>
    <location>
        <position position="91"/>
    </location>
</feature>
<feature type="sequence variant" id="VAR_071665" description="In IBD28; dbSNP:rs368287711." evidence="14 15">
    <original>R</original>
    <variation>W</variation>
    <location>
        <position position="101"/>
    </location>
</feature>
<feature type="sequence variant" id="VAR_016295" description="In dbSNP:rs4252303." evidence="18">
    <original>V</original>
    <variation>I</variation>
    <location>
        <position position="113"/>
    </location>
</feature>
<feature type="sequence variant" id="VAR_071666" description="In IBD28; dbSNP:rs199989396." evidence="14 15">
    <original>R</original>
    <variation>H</variation>
    <location>
        <position position="117"/>
    </location>
</feature>
<feature type="sequence variant" id="VAR_063543" description="In IBD28; dbSNP:rs137853579." evidence="12">
    <original>G</original>
    <variation>R</variation>
    <location>
        <position position="141"/>
    </location>
</feature>
<feature type="sequence variant" id="VAR_016296" description="In dbSNP:rs3135932." evidence="18">
    <original>S</original>
    <variation>G</variation>
    <location>
        <position position="159"/>
    </location>
</feature>
<feature type="sequence variant" id="VAR_016297" description="In dbSNP:rs4252273." evidence="18">
    <original>R</original>
    <variation>Q</variation>
    <location>
        <position position="212"/>
    </location>
</feature>
<feature type="sequence variant" id="VAR_020004" description="In dbSNP:rs2228055.">
    <original>I</original>
    <variation>V</variation>
    <location>
        <position position="224"/>
    </location>
</feature>
<feature type="sequence variant" id="VAR_071667" description="In IBD28; dbSNP:rs149491038." evidence="14 15">
    <original>R</original>
    <variation>C</variation>
    <location>
        <position position="262"/>
    </location>
</feature>
<feature type="sequence variant" id="VAR_016298" description="In dbSNP:rs2229113." evidence="7 9 17 18 19">
    <original>R</original>
    <variation>G</variation>
    <location>
        <position position="351"/>
    </location>
</feature>
<feature type="sequence variant" id="VAR_049175" description="In dbSNP:rs35235073.">
    <original>P</original>
    <variation>S</variation>
    <location>
        <position position="353"/>
    </location>
</feature>
<feature type="sequence variant" id="VAR_016299" description="In dbSNP:rs2229114." evidence="18">
    <original>S</original>
    <variation>L</variation>
    <location>
        <position position="420"/>
    </location>
</feature>
<feature type="strand" evidence="21">
    <location>
        <begin position="32"/>
        <end position="37"/>
    </location>
</feature>
<feature type="strand" evidence="21">
    <location>
        <begin position="40"/>
        <end position="45"/>
    </location>
</feature>
<feature type="strand" evidence="21">
    <location>
        <begin position="56"/>
        <end position="63"/>
    </location>
</feature>
<feature type="strand" evidence="21">
    <location>
        <begin position="70"/>
        <end position="82"/>
    </location>
</feature>
<feature type="helix" evidence="21">
    <location>
        <begin position="84"/>
        <end position="87"/>
    </location>
</feature>
<feature type="helix" evidence="21">
    <location>
        <begin position="90"/>
        <end position="92"/>
    </location>
</feature>
<feature type="strand" evidence="21">
    <location>
        <begin position="96"/>
        <end position="104"/>
    </location>
</feature>
<feature type="strand" evidence="23">
    <location>
        <begin position="107"/>
        <end position="113"/>
    </location>
</feature>
<feature type="helix" evidence="21">
    <location>
        <begin position="120"/>
        <end position="122"/>
    </location>
</feature>
<feature type="strand" evidence="21">
    <location>
        <begin position="123"/>
        <end position="125"/>
    </location>
</feature>
<feature type="strand" evidence="21">
    <location>
        <begin position="128"/>
        <end position="134"/>
    </location>
</feature>
<feature type="strand" evidence="21">
    <location>
        <begin position="136"/>
        <end position="144"/>
    </location>
</feature>
<feature type="strand" evidence="21">
    <location>
        <begin position="149"/>
        <end position="151"/>
    </location>
</feature>
<feature type="helix" evidence="21">
    <location>
        <begin position="157"/>
        <end position="160"/>
    </location>
</feature>
<feature type="strand" evidence="21">
    <location>
        <begin position="165"/>
        <end position="176"/>
    </location>
</feature>
<feature type="strand" evidence="21">
    <location>
        <begin position="181"/>
        <end position="193"/>
    </location>
</feature>
<feature type="strand" evidence="21">
    <location>
        <begin position="199"/>
        <end position="209"/>
    </location>
</feature>
<feature type="strand" evidence="21">
    <location>
        <begin position="222"/>
        <end position="225"/>
    </location>
</feature>
<feature type="helix" evidence="22">
    <location>
        <begin position="268"/>
        <end position="270"/>
    </location>
</feature>
<sequence>MLPCLVVLLAALLSLRLGSDAHGTELPSPPSVWFEAEFFHHILHWTPIPNQSESTCYEVALLRYGIESWNSISNCSQTLSYDLTAVTLDLYHSNGYRARVRAVDGSRHSNWTVTNTRFSVDEVTLTVGSVNLEIHNGFILGKIQLPRPKMAPANDTYESIFSHFREYEIAIRKVPGNFTFTHKKVKHENFSLLTSGEVGEFCVQVKPSVASRSNKGMWSKEECISLTRQYFTVTNVIIFFAFVLLLSGALAYCLALQLYVRRRKKLPSVLLFKKPSPFIFISQRPSPETQDTIHPLDEEAFLKVSPELKNLDLHGSTDSGFGSTKPSLQTEEPQFLLPDPHPQADRTLGNREPPVLGDSCSSGSSNSTDSGICLQEPSLSPSTGPTWEQQVGSNSRGQDDSGIDLVQNSEGRAGDTQGGSALGHHSPPEPEVPGEEDPAAVAFQGYLRQTRCAEEKATKTGCLEEESPLTDGLGPKFGRCLVDEAGLHPPALAKGYLKQDPLEMTLASSGAPTGQWNQPTEEWSLLALSSCSDLGISDWSFAHDLAPLGCVAAPGGLLGSFNSDLVTLPLISSLQSSE</sequence>
<proteinExistence type="evidence at protein level"/>